<name>LYSK_PYRHO</name>
<organism>
    <name type="scientific">Pyrococcus horikoshii (strain ATCC 700860 / DSM 12428 / JCM 9974 / NBRC 100139 / OT-3)</name>
    <dbReference type="NCBI Taxonomy" id="70601"/>
    <lineage>
        <taxon>Archaea</taxon>
        <taxon>Methanobacteriati</taxon>
        <taxon>Methanobacteriota</taxon>
        <taxon>Thermococci</taxon>
        <taxon>Thermococcales</taxon>
        <taxon>Thermococcaceae</taxon>
        <taxon>Pyrococcus</taxon>
    </lineage>
</organism>
<gene>
    <name evidence="1" type="primary">lysK</name>
    <name type="ordered locus">PH1715</name>
</gene>
<comment type="function">
    <text evidence="1">Catalyzes the release of L-lysine from [LysW]-gamma-L-lysine and the release of L-ornithine from [LysW]-L-ornithine.</text>
</comment>
<comment type="catalytic activity">
    <reaction evidence="1">
        <text>[amino-group carrier protein]-C-terminal-gamma-(L-lysyl)-L-glutamate + H2O = [amino-group carrier protein]-C-terminal-L-glutamate + L-lysine</text>
        <dbReference type="Rhea" id="RHEA:48684"/>
        <dbReference type="Rhea" id="RHEA-COMP:9693"/>
        <dbReference type="Rhea" id="RHEA-COMP:9715"/>
        <dbReference type="ChEBI" id="CHEBI:15377"/>
        <dbReference type="ChEBI" id="CHEBI:32551"/>
        <dbReference type="ChEBI" id="CHEBI:78525"/>
        <dbReference type="ChEBI" id="CHEBI:78526"/>
        <dbReference type="EC" id="3.5.1.130"/>
    </reaction>
</comment>
<comment type="catalytic activity">
    <reaction evidence="1">
        <text>[amino-group carrier protein]-C-terminal-gamma-(L-ornithyl)-L-glutamate + H2O = [amino-group carrier protein]-C-terminal-L-glutamate + L-ornithine</text>
        <dbReference type="Rhea" id="RHEA:52676"/>
        <dbReference type="Rhea" id="RHEA-COMP:9693"/>
        <dbReference type="Rhea" id="RHEA-COMP:13328"/>
        <dbReference type="ChEBI" id="CHEBI:15377"/>
        <dbReference type="ChEBI" id="CHEBI:46911"/>
        <dbReference type="ChEBI" id="CHEBI:78525"/>
        <dbReference type="ChEBI" id="CHEBI:136763"/>
        <dbReference type="EC" id="3.5.1.132"/>
    </reaction>
</comment>
<comment type="cofactor">
    <cofactor evidence="1">
        <name>Zn(2+)</name>
        <dbReference type="ChEBI" id="CHEBI:29105"/>
    </cofactor>
    <cofactor evidence="1">
        <name>Co(2+)</name>
        <dbReference type="ChEBI" id="CHEBI:48828"/>
    </cofactor>
    <text evidence="1">Binds 2 Zn(2+) or Co(2+) ions per subunit.</text>
</comment>
<comment type="pathway">
    <text evidence="1">Amino-acid biosynthesis; L-lysine biosynthesis via AAA pathway; L-lysine from L-alpha-aminoadipate (Thermus route): step 5/5.</text>
</comment>
<comment type="pathway">
    <text evidence="1">Amino-acid biosynthesis; L-arginine biosynthesis.</text>
</comment>
<comment type="subcellular location">
    <subcellularLocation>
        <location evidence="1">Cytoplasm</location>
    </subcellularLocation>
</comment>
<comment type="similarity">
    <text evidence="1">Belongs to the peptidase M20A family. LysK subfamily.</text>
</comment>
<accession>O59402</accession>
<proteinExistence type="inferred from homology"/>
<reference key="1">
    <citation type="journal article" date="1998" name="DNA Res.">
        <title>Complete sequence and gene organization of the genome of a hyper-thermophilic archaebacterium, Pyrococcus horikoshii OT3.</title>
        <authorList>
            <person name="Kawarabayasi Y."/>
            <person name="Sawada M."/>
            <person name="Horikawa H."/>
            <person name="Haikawa Y."/>
            <person name="Hino Y."/>
            <person name="Yamamoto S."/>
            <person name="Sekine M."/>
            <person name="Baba S."/>
            <person name="Kosugi H."/>
            <person name="Hosoyama A."/>
            <person name="Nagai Y."/>
            <person name="Sakai M."/>
            <person name="Ogura K."/>
            <person name="Otsuka R."/>
            <person name="Nakazawa H."/>
            <person name="Takamiya M."/>
            <person name="Ohfuku Y."/>
            <person name="Funahashi T."/>
            <person name="Tanaka T."/>
            <person name="Kudoh Y."/>
            <person name="Yamazaki J."/>
            <person name="Kushida N."/>
            <person name="Oguchi A."/>
            <person name="Aoki K."/>
            <person name="Yoshizawa T."/>
            <person name="Nakamura Y."/>
            <person name="Robb F.T."/>
            <person name="Horikoshi K."/>
            <person name="Masuchi Y."/>
            <person name="Shizuya H."/>
            <person name="Kikuchi H."/>
        </authorList>
    </citation>
    <scope>NUCLEOTIDE SEQUENCE [LARGE SCALE GENOMIC DNA]</scope>
    <source>
        <strain>ATCC 700860 / DSM 12428 / JCM 9974 / NBRC 100139 / OT-3</strain>
    </source>
</reference>
<feature type="chain" id="PRO_0000185348" description="Putative [LysW]-lysine/[LysW]-ornithine hydrolase">
    <location>
        <begin position="1"/>
        <end position="325"/>
    </location>
</feature>
<feature type="active site" evidence="1">
    <location>
        <position position="68"/>
    </location>
</feature>
<feature type="active site" description="Proton acceptor" evidence="1">
    <location>
        <position position="117"/>
    </location>
</feature>
<feature type="binding site" evidence="1">
    <location>
        <position position="66"/>
    </location>
    <ligand>
        <name>Zn(2+)</name>
        <dbReference type="ChEBI" id="CHEBI:29105"/>
        <label>1</label>
    </ligand>
</feature>
<feature type="binding site" evidence="1">
    <location>
        <position position="90"/>
    </location>
    <ligand>
        <name>Zn(2+)</name>
        <dbReference type="ChEBI" id="CHEBI:29105"/>
        <label>1</label>
    </ligand>
</feature>
<feature type="binding site" evidence="1">
    <location>
        <position position="90"/>
    </location>
    <ligand>
        <name>Zn(2+)</name>
        <dbReference type="ChEBI" id="CHEBI:29105"/>
        <label>2</label>
    </ligand>
</feature>
<feature type="binding site" evidence="1">
    <location>
        <position position="118"/>
    </location>
    <ligand>
        <name>Zn(2+)</name>
        <dbReference type="ChEBI" id="CHEBI:29105"/>
        <label>2</label>
    </ligand>
</feature>
<feature type="binding site" evidence="1">
    <location>
        <position position="139"/>
    </location>
    <ligand>
        <name>Zn(2+)</name>
        <dbReference type="ChEBI" id="CHEBI:29105"/>
        <label>1</label>
    </ligand>
</feature>
<feature type="binding site" evidence="1">
    <location>
        <position position="297"/>
    </location>
    <ligand>
        <name>Zn(2+)</name>
        <dbReference type="ChEBI" id="CHEBI:29105"/>
        <label>2</label>
    </ligand>
</feature>
<protein>
    <recommendedName>
        <fullName evidence="1">Putative [LysW]-lysine/[LysW]-ornithine hydrolase</fullName>
        <ecNumber evidence="1">3.5.1.130</ecNumber>
        <ecNumber evidence="1">3.5.1.132</ecNumber>
    </recommendedName>
</protein>
<dbReference type="EC" id="3.5.1.130" evidence="1"/>
<dbReference type="EC" id="3.5.1.132" evidence="1"/>
<dbReference type="EMBL" id="BA000001">
    <property type="protein sequence ID" value="BAA30829.1"/>
    <property type="molecule type" value="Genomic_DNA"/>
</dbReference>
<dbReference type="PIR" id="F71179">
    <property type="entry name" value="F71179"/>
</dbReference>
<dbReference type="RefSeq" id="WP_010885781.1">
    <property type="nucleotide sequence ID" value="NC_000961.1"/>
</dbReference>
<dbReference type="SMR" id="O59402"/>
<dbReference type="STRING" id="70601.gene:9378711"/>
<dbReference type="EnsemblBacteria" id="BAA30829">
    <property type="protein sequence ID" value="BAA30829"/>
    <property type="gene ID" value="BAA30829"/>
</dbReference>
<dbReference type="GeneID" id="1442562"/>
<dbReference type="KEGG" id="pho:PH1715"/>
<dbReference type="eggNOG" id="arCOG01107">
    <property type="taxonomic scope" value="Archaea"/>
</dbReference>
<dbReference type="OrthoDB" id="24854at2157"/>
<dbReference type="UniPathway" id="UPA00033">
    <property type="reaction ID" value="UER00039"/>
</dbReference>
<dbReference type="UniPathway" id="UPA00068"/>
<dbReference type="Proteomes" id="UP000000752">
    <property type="component" value="Chromosome"/>
</dbReference>
<dbReference type="GO" id="GO:0005737">
    <property type="term" value="C:cytoplasm"/>
    <property type="evidence" value="ECO:0007669"/>
    <property type="project" value="UniProtKB-SubCell"/>
</dbReference>
<dbReference type="GO" id="GO:0050897">
    <property type="term" value="F:cobalt ion binding"/>
    <property type="evidence" value="ECO:0007669"/>
    <property type="project" value="UniProtKB-UniRule"/>
</dbReference>
<dbReference type="GO" id="GO:0016811">
    <property type="term" value="F:hydrolase activity, acting on carbon-nitrogen (but not peptide) bonds, in linear amides"/>
    <property type="evidence" value="ECO:0007669"/>
    <property type="project" value="UniProtKB-UniRule"/>
</dbReference>
<dbReference type="GO" id="GO:0008270">
    <property type="term" value="F:zinc ion binding"/>
    <property type="evidence" value="ECO:0007669"/>
    <property type="project" value="UniProtKB-UniRule"/>
</dbReference>
<dbReference type="GO" id="GO:0042450">
    <property type="term" value="P:arginine biosynthetic process via ornithine"/>
    <property type="evidence" value="ECO:0007669"/>
    <property type="project" value="UniProtKB-UniRule"/>
</dbReference>
<dbReference type="GO" id="GO:0006526">
    <property type="term" value="P:L-arginine biosynthetic process"/>
    <property type="evidence" value="ECO:0007669"/>
    <property type="project" value="UniProtKB-UniPathway"/>
</dbReference>
<dbReference type="GO" id="GO:0019878">
    <property type="term" value="P:lysine biosynthetic process via aminoadipic acid"/>
    <property type="evidence" value="ECO:0007669"/>
    <property type="project" value="UniProtKB-UniRule"/>
</dbReference>
<dbReference type="CDD" id="cd05653">
    <property type="entry name" value="M20_ArgE_LysK"/>
    <property type="match status" value="1"/>
</dbReference>
<dbReference type="Gene3D" id="3.40.630.10">
    <property type="entry name" value="Zn peptidases"/>
    <property type="match status" value="2"/>
</dbReference>
<dbReference type="HAMAP" id="MF_01120">
    <property type="entry name" value="LysK"/>
    <property type="match status" value="1"/>
</dbReference>
<dbReference type="InterPro" id="IPR001261">
    <property type="entry name" value="ArgE/DapE_CS"/>
</dbReference>
<dbReference type="InterPro" id="IPR010175">
    <property type="entry name" value="LysK"/>
</dbReference>
<dbReference type="InterPro" id="IPR002933">
    <property type="entry name" value="Peptidase_M20"/>
</dbReference>
<dbReference type="InterPro" id="IPR050072">
    <property type="entry name" value="Peptidase_M20A"/>
</dbReference>
<dbReference type="InterPro" id="IPR008007">
    <property type="entry name" value="Peptidase_M42"/>
</dbReference>
<dbReference type="NCBIfam" id="TIGR01902">
    <property type="entry name" value="dapE-lys-deAc"/>
    <property type="match status" value="1"/>
</dbReference>
<dbReference type="NCBIfam" id="NF003367">
    <property type="entry name" value="PRK04443.1"/>
    <property type="match status" value="1"/>
</dbReference>
<dbReference type="PANTHER" id="PTHR43808:SF28">
    <property type="entry name" value="[LYSW]-LYSINE_[LYSW]-ORNITHINE HYDROLASE"/>
    <property type="match status" value="1"/>
</dbReference>
<dbReference type="PANTHER" id="PTHR43808">
    <property type="entry name" value="ACETYLORNITHINE DEACETYLASE"/>
    <property type="match status" value="1"/>
</dbReference>
<dbReference type="Pfam" id="PF01546">
    <property type="entry name" value="Peptidase_M20"/>
    <property type="match status" value="1"/>
</dbReference>
<dbReference type="PIRSF" id="PIRSF001123">
    <property type="entry name" value="PepA_GA"/>
    <property type="match status" value="1"/>
</dbReference>
<dbReference type="SUPFAM" id="SSF53187">
    <property type="entry name" value="Zn-dependent exopeptidases"/>
    <property type="match status" value="1"/>
</dbReference>
<dbReference type="PROSITE" id="PS00758">
    <property type="entry name" value="ARGE_DAPE_CPG2_1"/>
    <property type="match status" value="1"/>
</dbReference>
<evidence type="ECO:0000255" key="1">
    <source>
        <dbReference type="HAMAP-Rule" id="MF_01120"/>
    </source>
</evidence>
<keyword id="KW-0028">Amino-acid biosynthesis</keyword>
<keyword id="KW-0055">Arginine biosynthesis</keyword>
<keyword id="KW-0170">Cobalt</keyword>
<keyword id="KW-0963">Cytoplasm</keyword>
<keyword id="KW-0378">Hydrolase</keyword>
<keyword id="KW-0457">Lysine biosynthesis</keyword>
<keyword id="KW-0479">Metal-binding</keyword>
<keyword id="KW-0862">Zinc</keyword>
<sequence>MISEEEKIKFLKELVEIYSPTGREEEAAKFIKEKFEEYGIEAYVDNVGNVIARKSGEGPLVLLAGHIDTVPGYIPVRIEGEVLWGRGSVDAKGPLATLFFSTIEGNANVIFAGLVDEEGFSKGARNLKIPRPDYIIVGEPSGTNGVTIGYKGSLTVRFVERVEKVHSSLGVGAAERLIEKWLEISKDFSDGFNGLNGRIVRFLAYDREFEFYGEMIINLRTPPGYVPPLEWDIIDFVPAYEVDRRSPLVRAFVKSIREAGLKPKLKKKSGTADTNILGPKFGVDAVAYGPGDSKLDHTPYERINLREYLKSIEILKAVLRKLKGG</sequence>